<protein>
    <recommendedName>
        <fullName evidence="1">Cytidylate kinase</fullName>
        <shortName evidence="1">CK</shortName>
        <ecNumber evidence="1">2.7.4.25</ecNumber>
    </recommendedName>
    <alternativeName>
        <fullName evidence="1">Cytidine monophosphate kinase</fullName>
        <shortName evidence="1">CMP kinase</shortName>
    </alternativeName>
</protein>
<sequence>MIITIDGPSGTGKSTTAKALADHLHFNYCNTGKMYRTLAYARLQSPWATLPLTKFLEEPPFSFTFATGQPLESFFNGHLLTSELTTQEVANAASELSQLPEVRAFMQDLQRRYAQLGNCVFEGRDMGSKVFPNADLKIFLTSSPEVRAQRRLKDLPEGTLSPEQLQAELVKRDAADAQRAHDPLVIPENGIVIDSSDLTIRQVLEKILALLFRNEL</sequence>
<keyword id="KW-0067">ATP-binding</keyword>
<keyword id="KW-0963">Cytoplasm</keyword>
<keyword id="KW-0418">Kinase</keyword>
<keyword id="KW-0547">Nucleotide-binding</keyword>
<keyword id="KW-0808">Transferase</keyword>
<name>KCY_CHLPN</name>
<reference key="1">
    <citation type="journal article" date="1999" name="Nat. Genet.">
        <title>Comparative genomes of Chlamydia pneumoniae and C. trachomatis.</title>
        <authorList>
            <person name="Kalman S."/>
            <person name="Mitchell W.P."/>
            <person name="Marathe R."/>
            <person name="Lammel C.J."/>
            <person name="Fan J."/>
            <person name="Hyman R.W."/>
            <person name="Olinger L."/>
            <person name="Grimwood J."/>
            <person name="Davis R.W."/>
            <person name="Stephens R.S."/>
        </authorList>
    </citation>
    <scope>NUCLEOTIDE SEQUENCE [LARGE SCALE GENOMIC DNA]</scope>
    <source>
        <strain>CWL029</strain>
    </source>
</reference>
<reference key="2">
    <citation type="journal article" date="2000" name="Nucleic Acids Res.">
        <title>Genome sequences of Chlamydia trachomatis MoPn and Chlamydia pneumoniae AR39.</title>
        <authorList>
            <person name="Read T.D."/>
            <person name="Brunham R.C."/>
            <person name="Shen C."/>
            <person name="Gill S.R."/>
            <person name="Heidelberg J.F."/>
            <person name="White O."/>
            <person name="Hickey E.K."/>
            <person name="Peterson J.D."/>
            <person name="Utterback T.R."/>
            <person name="Berry K.J."/>
            <person name="Bass S."/>
            <person name="Linher K.D."/>
            <person name="Weidman J.F."/>
            <person name="Khouri H.M."/>
            <person name="Craven B."/>
            <person name="Bowman C."/>
            <person name="Dodson R.J."/>
            <person name="Gwinn M.L."/>
            <person name="Nelson W.C."/>
            <person name="DeBoy R.T."/>
            <person name="Kolonay J.F."/>
            <person name="McClarty G."/>
            <person name="Salzberg S.L."/>
            <person name="Eisen J.A."/>
            <person name="Fraser C.M."/>
        </authorList>
    </citation>
    <scope>NUCLEOTIDE SEQUENCE [LARGE SCALE GENOMIC DNA]</scope>
    <source>
        <strain>AR39</strain>
    </source>
</reference>
<reference key="3">
    <citation type="journal article" date="2000" name="Nucleic Acids Res.">
        <title>Comparison of whole genome sequences of Chlamydia pneumoniae J138 from Japan and CWL029 from USA.</title>
        <authorList>
            <person name="Shirai M."/>
            <person name="Hirakawa H."/>
            <person name="Kimoto M."/>
            <person name="Tabuchi M."/>
            <person name="Kishi F."/>
            <person name="Ouchi K."/>
            <person name="Shiba T."/>
            <person name="Ishii K."/>
            <person name="Hattori M."/>
            <person name="Kuhara S."/>
            <person name="Nakazawa T."/>
        </authorList>
    </citation>
    <scope>NUCLEOTIDE SEQUENCE [LARGE SCALE GENOMIC DNA]</scope>
    <source>
        <strain>J138</strain>
    </source>
</reference>
<reference key="4">
    <citation type="submission" date="2002-05" db="EMBL/GenBank/DDBJ databases">
        <title>The genome sequence of Chlamydia pneumoniae TW183 and comparison with other Chlamydia strains based on whole genome sequence analysis.</title>
        <authorList>
            <person name="Geng M.M."/>
            <person name="Schuhmacher A."/>
            <person name="Muehldorfer I."/>
            <person name="Bensch K.W."/>
            <person name="Schaefer K.P."/>
            <person name="Schneider S."/>
            <person name="Pohl T."/>
            <person name="Essig A."/>
            <person name="Marre R."/>
            <person name="Melchers K."/>
        </authorList>
    </citation>
    <scope>NUCLEOTIDE SEQUENCE [LARGE SCALE GENOMIC DNA]</scope>
    <source>
        <strain>TW-183</strain>
    </source>
</reference>
<accession>Q9Z7Y5</accession>
<accession>Q9JQB1</accession>
<proteinExistence type="inferred from homology"/>
<evidence type="ECO:0000255" key="1">
    <source>
        <dbReference type="HAMAP-Rule" id="MF_00238"/>
    </source>
</evidence>
<dbReference type="EC" id="2.7.4.25" evidence="1"/>
<dbReference type="EMBL" id="AE001363">
    <property type="protein sequence ID" value="AAD18708.1"/>
    <property type="molecule type" value="Genomic_DNA"/>
</dbReference>
<dbReference type="EMBL" id="AE002161">
    <property type="protein sequence ID" value="AAF38054.1"/>
    <property type="molecule type" value="Genomic_DNA"/>
</dbReference>
<dbReference type="EMBL" id="BA000008">
    <property type="protein sequence ID" value="BAA98774.1"/>
    <property type="molecule type" value="Genomic_DNA"/>
</dbReference>
<dbReference type="EMBL" id="AE009440">
    <property type="protein sequence ID" value="AAP98519.1"/>
    <property type="molecule type" value="Genomic_DNA"/>
</dbReference>
<dbReference type="PIR" id="A72063">
    <property type="entry name" value="A72063"/>
</dbReference>
<dbReference type="PIR" id="D86561">
    <property type="entry name" value="D86561"/>
</dbReference>
<dbReference type="RefSeq" id="NP_224764.1">
    <property type="nucleotide sequence ID" value="NC_000922.1"/>
</dbReference>
<dbReference type="RefSeq" id="WP_010883206.1">
    <property type="nucleotide sequence ID" value="NZ_LN847257.1"/>
</dbReference>
<dbReference type="SMR" id="Q9Z7Y5"/>
<dbReference type="STRING" id="406984.CPK_ORF01085"/>
<dbReference type="GeneID" id="45050612"/>
<dbReference type="KEGG" id="cpa:CP_0181"/>
<dbReference type="KEGG" id="cpj:cmk"/>
<dbReference type="KEGG" id="cpn:CPn_0568"/>
<dbReference type="KEGG" id="cpt:CpB0590"/>
<dbReference type="PATRIC" id="fig|115713.3.peg.633"/>
<dbReference type="eggNOG" id="COG0283">
    <property type="taxonomic scope" value="Bacteria"/>
</dbReference>
<dbReference type="HOGENOM" id="CLU_079959_0_2_0"/>
<dbReference type="OMA" id="RAITWWM"/>
<dbReference type="OrthoDB" id="9807434at2"/>
<dbReference type="Proteomes" id="UP000000583">
    <property type="component" value="Chromosome"/>
</dbReference>
<dbReference type="Proteomes" id="UP000000801">
    <property type="component" value="Chromosome"/>
</dbReference>
<dbReference type="GO" id="GO:0005737">
    <property type="term" value="C:cytoplasm"/>
    <property type="evidence" value="ECO:0007669"/>
    <property type="project" value="UniProtKB-SubCell"/>
</dbReference>
<dbReference type="GO" id="GO:0005524">
    <property type="term" value="F:ATP binding"/>
    <property type="evidence" value="ECO:0007669"/>
    <property type="project" value="UniProtKB-UniRule"/>
</dbReference>
<dbReference type="GO" id="GO:0036430">
    <property type="term" value="F:CMP kinase activity"/>
    <property type="evidence" value="ECO:0007669"/>
    <property type="project" value="RHEA"/>
</dbReference>
<dbReference type="GO" id="GO:0036431">
    <property type="term" value="F:dCMP kinase activity"/>
    <property type="evidence" value="ECO:0007669"/>
    <property type="project" value="RHEA"/>
</dbReference>
<dbReference type="GO" id="GO:0006220">
    <property type="term" value="P:pyrimidine nucleotide metabolic process"/>
    <property type="evidence" value="ECO:0007669"/>
    <property type="project" value="UniProtKB-UniRule"/>
</dbReference>
<dbReference type="CDD" id="cd02020">
    <property type="entry name" value="CMPK"/>
    <property type="match status" value="1"/>
</dbReference>
<dbReference type="FunFam" id="3.40.50.300:FF:003002">
    <property type="entry name" value="Cytidylate kinase"/>
    <property type="match status" value="1"/>
</dbReference>
<dbReference type="Gene3D" id="3.40.50.300">
    <property type="entry name" value="P-loop containing nucleotide triphosphate hydrolases"/>
    <property type="match status" value="1"/>
</dbReference>
<dbReference type="HAMAP" id="MF_00238">
    <property type="entry name" value="Cytidyl_kinase_type1"/>
    <property type="match status" value="1"/>
</dbReference>
<dbReference type="InterPro" id="IPR003136">
    <property type="entry name" value="Cytidylate_kin"/>
</dbReference>
<dbReference type="InterPro" id="IPR011994">
    <property type="entry name" value="Cytidylate_kinase_dom"/>
</dbReference>
<dbReference type="InterPro" id="IPR027417">
    <property type="entry name" value="P-loop_NTPase"/>
</dbReference>
<dbReference type="NCBIfam" id="TIGR00017">
    <property type="entry name" value="cmk"/>
    <property type="match status" value="1"/>
</dbReference>
<dbReference type="Pfam" id="PF02224">
    <property type="entry name" value="Cytidylate_kin"/>
    <property type="match status" value="1"/>
</dbReference>
<dbReference type="SUPFAM" id="SSF52540">
    <property type="entry name" value="P-loop containing nucleoside triphosphate hydrolases"/>
    <property type="match status" value="1"/>
</dbReference>
<gene>
    <name evidence="1" type="primary">cmk</name>
    <name type="ordered locus">CPn_0568</name>
    <name type="ordered locus">CP_0181</name>
    <name type="ordered locus">CpB0590</name>
</gene>
<feature type="chain" id="PRO_0000131900" description="Cytidylate kinase">
    <location>
        <begin position="1"/>
        <end position="216"/>
    </location>
</feature>
<feature type="binding site" evidence="1">
    <location>
        <begin position="7"/>
        <end position="15"/>
    </location>
    <ligand>
        <name>ATP</name>
        <dbReference type="ChEBI" id="CHEBI:30616"/>
    </ligand>
</feature>
<comment type="catalytic activity">
    <reaction evidence="1">
        <text>CMP + ATP = CDP + ADP</text>
        <dbReference type="Rhea" id="RHEA:11600"/>
        <dbReference type="ChEBI" id="CHEBI:30616"/>
        <dbReference type="ChEBI" id="CHEBI:58069"/>
        <dbReference type="ChEBI" id="CHEBI:60377"/>
        <dbReference type="ChEBI" id="CHEBI:456216"/>
        <dbReference type="EC" id="2.7.4.25"/>
    </reaction>
</comment>
<comment type="catalytic activity">
    <reaction evidence="1">
        <text>dCMP + ATP = dCDP + ADP</text>
        <dbReference type="Rhea" id="RHEA:25094"/>
        <dbReference type="ChEBI" id="CHEBI:30616"/>
        <dbReference type="ChEBI" id="CHEBI:57566"/>
        <dbReference type="ChEBI" id="CHEBI:58593"/>
        <dbReference type="ChEBI" id="CHEBI:456216"/>
        <dbReference type="EC" id="2.7.4.25"/>
    </reaction>
</comment>
<comment type="subcellular location">
    <subcellularLocation>
        <location evidence="1">Cytoplasm</location>
    </subcellularLocation>
</comment>
<comment type="similarity">
    <text evidence="1">Belongs to the cytidylate kinase family. Type 1 subfamily.</text>
</comment>
<organism>
    <name type="scientific">Chlamydia pneumoniae</name>
    <name type="common">Chlamydophila pneumoniae</name>
    <dbReference type="NCBI Taxonomy" id="83558"/>
    <lineage>
        <taxon>Bacteria</taxon>
        <taxon>Pseudomonadati</taxon>
        <taxon>Chlamydiota</taxon>
        <taxon>Chlamydiia</taxon>
        <taxon>Chlamydiales</taxon>
        <taxon>Chlamydiaceae</taxon>
        <taxon>Chlamydia/Chlamydophila group</taxon>
        <taxon>Chlamydia</taxon>
    </lineage>
</organism>